<proteinExistence type="inferred from homology"/>
<gene>
    <name type="primary">HSE1</name>
    <name type="ordered locus">YALI0F06446g</name>
</gene>
<accession>Q6C2N2</accession>
<comment type="function">
    <text evidence="1">Component of the ESCRT-0 complex which is the sorting receptor for ubiquitinated cargo proteins at the multivesicular body (MVB).</text>
</comment>
<comment type="subunit">
    <text evidence="1">Component of the ESCRT-0 complex composed of HSE1 and VPS27.</text>
</comment>
<comment type="subcellular location">
    <subcellularLocation>
        <location evidence="1">Endosome membrane</location>
        <topology evidence="1">Peripheral membrane protein</topology>
        <orientation evidence="1">Cytoplasmic side</orientation>
    </subcellularLocation>
</comment>
<comment type="similarity">
    <text evidence="6">Belongs to the STAM family.</text>
</comment>
<reference key="1">
    <citation type="journal article" date="2004" name="Nature">
        <title>Genome evolution in yeasts.</title>
        <authorList>
            <person name="Dujon B."/>
            <person name="Sherman D."/>
            <person name="Fischer G."/>
            <person name="Durrens P."/>
            <person name="Casaregola S."/>
            <person name="Lafontaine I."/>
            <person name="de Montigny J."/>
            <person name="Marck C."/>
            <person name="Neuveglise C."/>
            <person name="Talla E."/>
            <person name="Goffard N."/>
            <person name="Frangeul L."/>
            <person name="Aigle M."/>
            <person name="Anthouard V."/>
            <person name="Babour A."/>
            <person name="Barbe V."/>
            <person name="Barnay S."/>
            <person name="Blanchin S."/>
            <person name="Beckerich J.-M."/>
            <person name="Beyne E."/>
            <person name="Bleykasten C."/>
            <person name="Boisrame A."/>
            <person name="Boyer J."/>
            <person name="Cattolico L."/>
            <person name="Confanioleri F."/>
            <person name="de Daruvar A."/>
            <person name="Despons L."/>
            <person name="Fabre E."/>
            <person name="Fairhead C."/>
            <person name="Ferry-Dumazet H."/>
            <person name="Groppi A."/>
            <person name="Hantraye F."/>
            <person name="Hennequin C."/>
            <person name="Jauniaux N."/>
            <person name="Joyet P."/>
            <person name="Kachouri R."/>
            <person name="Kerrest A."/>
            <person name="Koszul R."/>
            <person name="Lemaire M."/>
            <person name="Lesur I."/>
            <person name="Ma L."/>
            <person name="Muller H."/>
            <person name="Nicaud J.-M."/>
            <person name="Nikolski M."/>
            <person name="Oztas S."/>
            <person name="Ozier-Kalogeropoulos O."/>
            <person name="Pellenz S."/>
            <person name="Potier S."/>
            <person name="Richard G.-F."/>
            <person name="Straub M.-L."/>
            <person name="Suleau A."/>
            <person name="Swennen D."/>
            <person name="Tekaia F."/>
            <person name="Wesolowski-Louvel M."/>
            <person name="Westhof E."/>
            <person name="Wirth B."/>
            <person name="Zeniou-Meyer M."/>
            <person name="Zivanovic Y."/>
            <person name="Bolotin-Fukuhara M."/>
            <person name="Thierry A."/>
            <person name="Bouchier C."/>
            <person name="Caudron B."/>
            <person name="Scarpelli C."/>
            <person name="Gaillardin C."/>
            <person name="Weissenbach J."/>
            <person name="Wincker P."/>
            <person name="Souciet J.-L."/>
        </authorList>
    </citation>
    <scope>NUCLEOTIDE SEQUENCE [LARGE SCALE GENOMIC DNA]</scope>
    <source>
        <strain>CLIB 122 / E 150</strain>
    </source>
</reference>
<protein>
    <recommendedName>
        <fullName>Class E vacuolar protein-sorting machinery protein HSE1</fullName>
    </recommendedName>
</protein>
<feature type="chain" id="PRO_0000292505" description="Class E vacuolar protein-sorting machinery protein HSE1">
    <location>
        <begin position="1"/>
        <end position="685"/>
    </location>
</feature>
<feature type="domain" description="VHS" evidence="4">
    <location>
        <begin position="18"/>
        <end position="148"/>
    </location>
</feature>
<feature type="domain" description="UIM" evidence="3">
    <location>
        <begin position="165"/>
        <end position="184"/>
    </location>
</feature>
<feature type="domain" description="SH3" evidence="2">
    <location>
        <begin position="250"/>
        <end position="309"/>
    </location>
</feature>
<feature type="region of interest" description="Disordered" evidence="5">
    <location>
        <begin position="144"/>
        <end position="168"/>
    </location>
</feature>
<feature type="region of interest" description="Disordered" evidence="5">
    <location>
        <begin position="182"/>
        <end position="247"/>
    </location>
</feature>
<feature type="region of interest" description="Disordered" evidence="5">
    <location>
        <begin position="432"/>
        <end position="685"/>
    </location>
</feature>
<feature type="compositionally biased region" description="Basic and acidic residues" evidence="5">
    <location>
        <begin position="144"/>
        <end position="166"/>
    </location>
</feature>
<feature type="compositionally biased region" description="Polar residues" evidence="5">
    <location>
        <begin position="182"/>
        <end position="206"/>
    </location>
</feature>
<feature type="compositionally biased region" description="Low complexity" evidence="5">
    <location>
        <begin position="212"/>
        <end position="241"/>
    </location>
</feature>
<feature type="compositionally biased region" description="Low complexity" evidence="5">
    <location>
        <begin position="432"/>
        <end position="448"/>
    </location>
</feature>
<feature type="compositionally biased region" description="Low complexity" evidence="5">
    <location>
        <begin position="457"/>
        <end position="498"/>
    </location>
</feature>
<feature type="compositionally biased region" description="Polar residues" evidence="5">
    <location>
        <begin position="499"/>
        <end position="522"/>
    </location>
</feature>
<feature type="compositionally biased region" description="Gly residues" evidence="5">
    <location>
        <begin position="539"/>
        <end position="553"/>
    </location>
</feature>
<feature type="compositionally biased region" description="Gly residues" evidence="5">
    <location>
        <begin position="562"/>
        <end position="572"/>
    </location>
</feature>
<feature type="compositionally biased region" description="Low complexity" evidence="5">
    <location>
        <begin position="574"/>
        <end position="584"/>
    </location>
</feature>
<feature type="compositionally biased region" description="Low complexity" evidence="5">
    <location>
        <begin position="591"/>
        <end position="604"/>
    </location>
</feature>
<feature type="compositionally biased region" description="Polar residues" evidence="5">
    <location>
        <begin position="627"/>
        <end position="645"/>
    </location>
</feature>
<feature type="compositionally biased region" description="Low complexity" evidence="5">
    <location>
        <begin position="646"/>
        <end position="658"/>
    </location>
</feature>
<feature type="compositionally biased region" description="Pro residues" evidence="5">
    <location>
        <begin position="668"/>
        <end position="685"/>
    </location>
</feature>
<sequence>MFRSSEPVSPLDDVVTKATDENLTTENWQYILDVCDEVNNDPENGAKNVITSVTKRLNKKFANTQLYALTLVISLSSNCGSKMQQAIASKAFVKTLMKLANDSAVHKSVKSKVLEVLEQLTDEYKKDPSLRLIEEAYDELSRKKPDLKAPAKPEKHKITEQERQREEEELQMVLALSLSETNTSGSFQQHHQTNSQIQPPVNNSHFATDPHQQQQQQQQQHNQQDYGQQSNNANTNNNAPAVEDPTPTVATVSRVKALYDLNATEPGELSFRKGDIITVLESVFRDWWRGSLRGQVGIFPLNYVMPIAEPTPAEIEKEAQEELSVFSQSRNIEKLLALLSSQDAARLNLAENEELQSLYHSTLAIRPKLVKLIDKYAQRKDDLVELNEKFVKARRVYDDLMEASMPQYGGAAAAGGYAGGAQGGAPAGYPSAQGAPAGYPGTSGTPGTPGYPPQYPPQQQQQQQQQQQQQPPYPVQPLQTHQQQPQQQQQQTPYPVHQYDNTQAHGRQGSTDSGRSQRMYSQGGQGGQGPTDLHPATTGGSGYGFPPQYGGGAPSAPSAPHGGAGGPGGPGGPSAPSGAHSGAPSAPPSHAPAASAPHGYGSPSTAHSAPYGTSPAASAPARHSPYINGTPTSNLGQQSPVTSQSIPIPNNNNLAAPPVQGLYSHGTSPPPPVPNAGPPPSNFYE</sequence>
<organism>
    <name type="scientific">Yarrowia lipolytica (strain CLIB 122 / E 150)</name>
    <name type="common">Yeast</name>
    <name type="synonym">Candida lipolytica</name>
    <dbReference type="NCBI Taxonomy" id="284591"/>
    <lineage>
        <taxon>Eukaryota</taxon>
        <taxon>Fungi</taxon>
        <taxon>Dikarya</taxon>
        <taxon>Ascomycota</taxon>
        <taxon>Saccharomycotina</taxon>
        <taxon>Dipodascomycetes</taxon>
        <taxon>Dipodascales</taxon>
        <taxon>Dipodascales incertae sedis</taxon>
        <taxon>Yarrowia</taxon>
    </lineage>
</organism>
<dbReference type="EMBL" id="CR382132">
    <property type="protein sequence ID" value="CAG77887.1"/>
    <property type="molecule type" value="Genomic_DNA"/>
</dbReference>
<dbReference type="RefSeq" id="XP_505080.1">
    <property type="nucleotide sequence ID" value="XM_505080.1"/>
</dbReference>
<dbReference type="SMR" id="Q6C2N2"/>
<dbReference type="FunCoup" id="Q6C2N2">
    <property type="interactions" value="358"/>
</dbReference>
<dbReference type="STRING" id="284591.Q6C2N2"/>
<dbReference type="EnsemblFungi" id="CAG77887">
    <property type="protein sequence ID" value="CAG77887"/>
    <property type="gene ID" value="YALI0_F06446g"/>
</dbReference>
<dbReference type="KEGG" id="yli:2908387"/>
<dbReference type="VEuPathDB" id="FungiDB:YALI0_F06446g"/>
<dbReference type="HOGENOM" id="CLU_010104_1_1_1"/>
<dbReference type="InParanoid" id="Q6C2N2"/>
<dbReference type="OMA" id="GLMEECY"/>
<dbReference type="OrthoDB" id="6908at4891"/>
<dbReference type="Proteomes" id="UP000001300">
    <property type="component" value="Chromosome F"/>
</dbReference>
<dbReference type="GO" id="GO:0010008">
    <property type="term" value="C:endosome membrane"/>
    <property type="evidence" value="ECO:0007669"/>
    <property type="project" value="UniProtKB-SubCell"/>
</dbReference>
<dbReference type="GO" id="GO:0033565">
    <property type="term" value="C:ESCRT-0 complex"/>
    <property type="evidence" value="ECO:0000318"/>
    <property type="project" value="GO_Central"/>
</dbReference>
<dbReference type="GO" id="GO:0035091">
    <property type="term" value="F:phosphatidylinositol binding"/>
    <property type="evidence" value="ECO:0007669"/>
    <property type="project" value="InterPro"/>
</dbReference>
<dbReference type="GO" id="GO:0043130">
    <property type="term" value="F:ubiquitin binding"/>
    <property type="evidence" value="ECO:0007669"/>
    <property type="project" value="InterPro"/>
</dbReference>
<dbReference type="GO" id="GO:0043328">
    <property type="term" value="P:protein transport to vacuole involved in ubiquitin-dependent protein catabolic process via the multivesicular body sorting pathway"/>
    <property type="evidence" value="ECO:0000318"/>
    <property type="project" value="GO_Central"/>
</dbReference>
<dbReference type="CDD" id="cd21386">
    <property type="entry name" value="GAT_Hse1"/>
    <property type="match status" value="1"/>
</dbReference>
<dbReference type="CDD" id="cd11805">
    <property type="entry name" value="SH3_GRB2_like_C"/>
    <property type="match status" value="1"/>
</dbReference>
<dbReference type="CDD" id="cd16978">
    <property type="entry name" value="VHS_HSE1"/>
    <property type="match status" value="1"/>
</dbReference>
<dbReference type="FunFam" id="2.30.30.40:FF:000072">
    <property type="entry name" value="Unconventional Myosin IB"/>
    <property type="match status" value="1"/>
</dbReference>
<dbReference type="Gene3D" id="1.20.5.1940">
    <property type="match status" value="1"/>
</dbReference>
<dbReference type="Gene3D" id="1.25.40.90">
    <property type="match status" value="1"/>
</dbReference>
<dbReference type="Gene3D" id="2.30.30.40">
    <property type="entry name" value="SH3 Domains"/>
    <property type="match status" value="1"/>
</dbReference>
<dbReference type="InterPro" id="IPR008942">
    <property type="entry name" value="ENTH_VHS"/>
</dbReference>
<dbReference type="InterPro" id="IPR004152">
    <property type="entry name" value="GAT_dom"/>
</dbReference>
<dbReference type="InterPro" id="IPR036028">
    <property type="entry name" value="SH3-like_dom_sf"/>
</dbReference>
<dbReference type="InterPro" id="IPR001452">
    <property type="entry name" value="SH3_domain"/>
</dbReference>
<dbReference type="InterPro" id="IPR050670">
    <property type="entry name" value="STAM"/>
</dbReference>
<dbReference type="InterPro" id="IPR003903">
    <property type="entry name" value="UIM_dom"/>
</dbReference>
<dbReference type="InterPro" id="IPR002014">
    <property type="entry name" value="VHS_dom"/>
</dbReference>
<dbReference type="PANTHER" id="PTHR45929">
    <property type="entry name" value="JAK PATHWAY SIGNAL TRANSDUCTION ADAPTOR MOLECULE"/>
    <property type="match status" value="1"/>
</dbReference>
<dbReference type="PANTHER" id="PTHR45929:SF3">
    <property type="entry name" value="JAK PATHWAY SIGNAL TRANSDUCTION ADAPTOR MOLECULE"/>
    <property type="match status" value="1"/>
</dbReference>
<dbReference type="Pfam" id="PF03127">
    <property type="entry name" value="GAT"/>
    <property type="match status" value="1"/>
</dbReference>
<dbReference type="Pfam" id="PF00018">
    <property type="entry name" value="SH3_1"/>
    <property type="match status" value="1"/>
</dbReference>
<dbReference type="Pfam" id="PF00790">
    <property type="entry name" value="VHS"/>
    <property type="match status" value="1"/>
</dbReference>
<dbReference type="PRINTS" id="PR00499">
    <property type="entry name" value="P67PHOX"/>
</dbReference>
<dbReference type="PRINTS" id="PR00452">
    <property type="entry name" value="SH3DOMAIN"/>
</dbReference>
<dbReference type="SMART" id="SM00326">
    <property type="entry name" value="SH3"/>
    <property type="match status" value="1"/>
</dbReference>
<dbReference type="SMART" id="SM00288">
    <property type="entry name" value="VHS"/>
    <property type="match status" value="1"/>
</dbReference>
<dbReference type="SUPFAM" id="SSF48464">
    <property type="entry name" value="ENTH/VHS domain"/>
    <property type="match status" value="1"/>
</dbReference>
<dbReference type="SUPFAM" id="SSF89009">
    <property type="entry name" value="GAT-like domain"/>
    <property type="match status" value="1"/>
</dbReference>
<dbReference type="SUPFAM" id="SSF50044">
    <property type="entry name" value="SH3-domain"/>
    <property type="match status" value="1"/>
</dbReference>
<dbReference type="PROSITE" id="PS50002">
    <property type="entry name" value="SH3"/>
    <property type="match status" value="1"/>
</dbReference>
<dbReference type="PROSITE" id="PS50330">
    <property type="entry name" value="UIM"/>
    <property type="match status" value="1"/>
</dbReference>
<dbReference type="PROSITE" id="PS50179">
    <property type="entry name" value="VHS"/>
    <property type="match status" value="1"/>
</dbReference>
<keyword id="KW-0967">Endosome</keyword>
<keyword id="KW-0472">Membrane</keyword>
<keyword id="KW-0653">Protein transport</keyword>
<keyword id="KW-1185">Reference proteome</keyword>
<keyword id="KW-0728">SH3 domain</keyword>
<keyword id="KW-0813">Transport</keyword>
<name>HSE1_YARLI</name>
<evidence type="ECO:0000250" key="1"/>
<evidence type="ECO:0000255" key="2">
    <source>
        <dbReference type="PROSITE-ProRule" id="PRU00192"/>
    </source>
</evidence>
<evidence type="ECO:0000255" key="3">
    <source>
        <dbReference type="PROSITE-ProRule" id="PRU00213"/>
    </source>
</evidence>
<evidence type="ECO:0000255" key="4">
    <source>
        <dbReference type="PROSITE-ProRule" id="PRU00218"/>
    </source>
</evidence>
<evidence type="ECO:0000256" key="5">
    <source>
        <dbReference type="SAM" id="MobiDB-lite"/>
    </source>
</evidence>
<evidence type="ECO:0000305" key="6"/>